<name>SK1_MASDA</name>
<keyword id="KW-0027">Amidation</keyword>
<keyword id="KW-0903">Direct protein sequencing</keyword>
<keyword id="KW-0372">Hormone</keyword>
<keyword id="KW-0527">Neuropeptide</keyword>
<keyword id="KW-0964">Secreted</keyword>
<keyword id="KW-0765">Sulfation</keyword>
<reference evidence="5" key="1">
    <citation type="journal article" date="2009" name="BMC Evol. Biol.">
        <title>A proteomic approach for studying insect phylogeny: CAPA peptides of ancient insect taxa (Dictyoptera, Blattoptera) as a test case.</title>
        <authorList>
            <person name="Roth S."/>
            <person name="Fromm B."/>
            <person name="Gaede G."/>
            <person name="Predel R."/>
        </authorList>
    </citation>
    <scope>PROTEIN SEQUENCE</scope>
    <scope>AMIDATION AT PHE-11</scope>
    <source>
        <tissue evidence="3">Corpora cardiaca</tissue>
    </source>
</reference>
<proteinExistence type="evidence at protein level"/>
<sequence length="11" mass="1445">EQFDDYGHMRF</sequence>
<dbReference type="GO" id="GO:0005576">
    <property type="term" value="C:extracellular region"/>
    <property type="evidence" value="ECO:0007669"/>
    <property type="project" value="UniProtKB-SubCell"/>
</dbReference>
<dbReference type="GO" id="GO:0005179">
    <property type="term" value="F:hormone activity"/>
    <property type="evidence" value="ECO:0007669"/>
    <property type="project" value="UniProtKB-KW"/>
</dbReference>
<dbReference type="GO" id="GO:0007218">
    <property type="term" value="P:neuropeptide signaling pathway"/>
    <property type="evidence" value="ECO:0007669"/>
    <property type="project" value="UniProtKB-KW"/>
</dbReference>
<dbReference type="InterPro" id="IPR013152">
    <property type="entry name" value="Gastrin/cholecystokinin_CS"/>
</dbReference>
<dbReference type="InterPro" id="IPR013259">
    <property type="entry name" value="Sulfakinin"/>
</dbReference>
<dbReference type="Pfam" id="PF08257">
    <property type="entry name" value="Sulfakinin"/>
    <property type="match status" value="1"/>
</dbReference>
<dbReference type="PROSITE" id="PS00259">
    <property type="entry name" value="GASTRIN"/>
    <property type="match status" value="1"/>
</dbReference>
<protein>
    <recommendedName>
        <fullName evidence="4">Sulfakinin-1</fullName>
        <shortName evidence="4">MasDa-SK-1</shortName>
    </recommendedName>
</protein>
<accession>P85683</accession>
<evidence type="ECO:0000250" key="1">
    <source>
        <dbReference type="UniProtKB" id="P41493"/>
    </source>
</evidence>
<evidence type="ECO:0000255" key="2"/>
<evidence type="ECO:0000269" key="3">
    <source>
    </source>
</evidence>
<evidence type="ECO:0000303" key="4">
    <source>
    </source>
</evidence>
<evidence type="ECO:0000305" key="5"/>
<comment type="function">
    <text evidence="1">Myotropic peptide.</text>
</comment>
<comment type="subcellular location">
    <subcellularLocation>
        <location evidence="5">Secreted</location>
    </subcellularLocation>
</comment>
<comment type="similarity">
    <text evidence="2">Belongs to the gastrin/cholecystokinin family.</text>
</comment>
<feature type="peptide" id="PRO_0000378885" description="Sulfakinin-1" evidence="3">
    <location>
        <begin position="1"/>
        <end position="11"/>
    </location>
</feature>
<feature type="modified residue" description="Sulfotyrosine" evidence="1">
    <location>
        <position position="6"/>
    </location>
</feature>
<feature type="modified residue" description="Phenylalanine amide" evidence="3">
    <location>
        <position position="11"/>
    </location>
</feature>
<organism>
    <name type="scientific">Mastotermes darwiniensis</name>
    <name type="common">Giant northern termite</name>
    <dbReference type="NCBI Taxonomy" id="13139"/>
    <lineage>
        <taxon>Eukaryota</taxon>
        <taxon>Metazoa</taxon>
        <taxon>Ecdysozoa</taxon>
        <taxon>Arthropoda</taxon>
        <taxon>Hexapoda</taxon>
        <taxon>Insecta</taxon>
        <taxon>Pterygota</taxon>
        <taxon>Neoptera</taxon>
        <taxon>Polyneoptera</taxon>
        <taxon>Dictyoptera</taxon>
        <taxon>Blattodea</taxon>
        <taxon>Blattoidea</taxon>
        <taxon>Termitoidae</taxon>
        <taxon>Mastotermitidae</taxon>
        <taxon>Mastotermes</taxon>
    </lineage>
</organism>